<protein>
    <recommendedName>
        <fullName evidence="4">4-hydroxyphenylacetate decarboxylase activating enzyme</fullName>
        <shortName evidence="4">Hpd-AE</shortName>
        <ecNumber evidence="4">1.97.1.-</ecNumber>
    </recommendedName>
</protein>
<comment type="function">
    <text evidence="3 4">Catalyzes activation of 4-hydroxyphenylacetate decarboxylase under anaerobic conditions by generation of an organic free radical on a glycine residue, via a homolytic cleavage of S-adenosyl-L-methionine (SAM).</text>
</comment>
<comment type="catalytic activity">
    <reaction evidence="4">
        <text>glycyl-[protein] + reduced [flavodoxin] + S-adenosyl-L-methionine = glycin-2-yl radical-[protein] + semiquinone [flavodoxin] + 5'-deoxyadenosine + L-methionine + H(+)</text>
        <dbReference type="Rhea" id="RHEA:61976"/>
        <dbReference type="Rhea" id="RHEA-COMP:10622"/>
        <dbReference type="Rhea" id="RHEA-COMP:14480"/>
        <dbReference type="Rhea" id="RHEA-COMP:15993"/>
        <dbReference type="Rhea" id="RHEA-COMP:15994"/>
        <dbReference type="ChEBI" id="CHEBI:15378"/>
        <dbReference type="ChEBI" id="CHEBI:17319"/>
        <dbReference type="ChEBI" id="CHEBI:29947"/>
        <dbReference type="ChEBI" id="CHEBI:32722"/>
        <dbReference type="ChEBI" id="CHEBI:57618"/>
        <dbReference type="ChEBI" id="CHEBI:57844"/>
        <dbReference type="ChEBI" id="CHEBI:59789"/>
        <dbReference type="ChEBI" id="CHEBI:140311"/>
    </reaction>
</comment>
<comment type="cofactor">
    <cofactor evidence="4">
        <name>[4Fe-4S] cluster</name>
        <dbReference type="ChEBI" id="CHEBI:49883"/>
    </cofactor>
    <text evidence="4">Binds 2 [4Fe-4S] clusters. One cluster is coordinated with 3 cysteines and an exchangeable S-adenosyl-L-methionine.</text>
</comment>
<comment type="subunit">
    <text evidence="4">Monomer.</text>
</comment>
<comment type="similarity">
    <text evidence="5">Belongs to the organic radical-activating enzymes family.</text>
</comment>
<comment type="sequence caution" evidence="8">
    <conflict type="erroneous initiation">
        <sequence resource="EMBL-CDS" id="CBE01729"/>
    </conflict>
    <text>Extended N-terminus.</text>
</comment>
<reference key="1">
    <citation type="journal article" date="2009" name="Genome Biol.">
        <title>Comparative genome and phenotypic analysis of Clostridium difficile 027 strains provides insight into the evolution of a hypervirulent bacterium.</title>
        <authorList>
            <person name="Stabler R.A."/>
            <person name="He M."/>
            <person name="Dawson L."/>
            <person name="Martin M."/>
            <person name="Valiente E."/>
            <person name="Corton C."/>
            <person name="Lawley T.D."/>
            <person name="Sebaihia M."/>
            <person name="Quail M.A."/>
            <person name="Rose G."/>
            <person name="Gerding D.N."/>
            <person name="Gibert M."/>
            <person name="Popoff M.R."/>
            <person name="Parkhill J."/>
            <person name="Dougan G."/>
            <person name="Wren B.W."/>
        </authorList>
    </citation>
    <scope>NUCLEOTIDE SEQUENCE [LARGE SCALE GENOMIC DNA]</scope>
    <source>
        <strain>R20291</strain>
    </source>
</reference>
<sequence>MSSQKQLEGMIFDVQSFSVHDGPGCRTTVFLNGCPLSCKWCANPESWTVRPHMMFSELSCQYENGCTVCHGKCKNGALSFNLDNKPVIDWNICKDCESFECVNSCYYNAFKLCAKPYTVDELVQVIKRDSNNWRSNGGVTFSGGEPLLQHEFLHEVLLKCHEVNIHTAIETSACVSNEVFNKIFKDIDFAFIDIKHMDREKHKEQTGVYNDLILENISNLANSDWNGRLVLRVPVISGFNDSAENISDIISFMHKNNLIEINLLPFHRLGESKWIQLGKEYEYSDKGDIDEEHLEELQDIFLDNGIACYVGHETAF</sequence>
<proteinExistence type="inferred from homology"/>
<evidence type="ECO:0000250" key="1">
    <source>
        <dbReference type="UniProtKB" id="P0A9N4"/>
    </source>
</evidence>
<evidence type="ECO:0000250" key="2">
    <source>
        <dbReference type="UniProtKB" id="Q30W71"/>
    </source>
</evidence>
<evidence type="ECO:0000250" key="3">
    <source>
        <dbReference type="UniProtKB" id="Q46267"/>
    </source>
</evidence>
<evidence type="ECO:0000250" key="4">
    <source>
        <dbReference type="UniProtKB" id="Q84F14"/>
    </source>
</evidence>
<evidence type="ECO:0000255" key="5"/>
<evidence type="ECO:0000255" key="6">
    <source>
        <dbReference type="PROSITE-ProRule" id="PRU00711"/>
    </source>
</evidence>
<evidence type="ECO:0000255" key="7">
    <source>
        <dbReference type="PROSITE-ProRule" id="PRU01266"/>
    </source>
</evidence>
<evidence type="ECO:0000305" key="8"/>
<evidence type="ECO:0000312" key="9">
    <source>
        <dbReference type="EMBL" id="CBE01729.1"/>
    </source>
</evidence>
<keyword id="KW-0004">4Fe-4S</keyword>
<keyword id="KW-0408">Iron</keyword>
<keyword id="KW-0411">Iron-sulfur</keyword>
<keyword id="KW-0479">Metal-binding</keyword>
<keyword id="KW-0560">Oxidoreductase</keyword>
<keyword id="KW-0949">S-adenosyl-L-methionine</keyword>
<gene>
    <name evidence="9" type="primary">hpdA</name>
    <name type="ordered locus">CDR20291_0154</name>
</gene>
<feature type="chain" id="PRO_0000403686" description="4-hydroxyphenylacetate decarboxylase activating enzyme">
    <location>
        <begin position="1"/>
        <end position="316"/>
    </location>
</feature>
<feature type="domain" description="Radical SAM core" evidence="7">
    <location>
        <begin position="20"/>
        <end position="307"/>
    </location>
</feature>
<feature type="domain" description="4Fe-4S ferredoxin-type" evidence="6">
    <location>
        <begin position="84"/>
        <end position="115"/>
    </location>
</feature>
<feature type="binding site" evidence="1">
    <location>
        <position position="34"/>
    </location>
    <ligand>
        <name>[4Fe-4S] cluster</name>
        <dbReference type="ChEBI" id="CHEBI:49883"/>
        <label>1</label>
        <note>4Fe-4S-S-AdoMet</note>
    </ligand>
</feature>
<feature type="binding site" evidence="1">
    <location>
        <position position="38"/>
    </location>
    <ligand>
        <name>[4Fe-4S] cluster</name>
        <dbReference type="ChEBI" id="CHEBI:49883"/>
        <label>1</label>
        <note>4Fe-4S-S-AdoMet</note>
    </ligand>
</feature>
<feature type="binding site" evidence="1">
    <location>
        <begin position="40"/>
        <end position="42"/>
    </location>
    <ligand>
        <name>S-adenosyl-L-methionine</name>
        <dbReference type="ChEBI" id="CHEBI:59789"/>
    </ligand>
</feature>
<feature type="binding site" evidence="1">
    <location>
        <position position="41"/>
    </location>
    <ligand>
        <name>[4Fe-4S] cluster</name>
        <dbReference type="ChEBI" id="CHEBI:49883"/>
        <label>1</label>
        <note>4Fe-4S-S-AdoMet</note>
    </ligand>
</feature>
<feature type="binding site" evidence="2">
    <location>
        <position position="60"/>
    </location>
    <ligand>
        <name>[4Fe-4S] cluster</name>
        <dbReference type="ChEBI" id="CHEBI:49883"/>
        <label>2</label>
    </ligand>
</feature>
<feature type="binding site" evidence="2">
    <location>
        <position position="66"/>
    </location>
    <ligand>
        <name>[4Fe-4S] cluster</name>
        <dbReference type="ChEBI" id="CHEBI:49883"/>
        <label>2</label>
    </ligand>
</feature>
<feature type="binding site" evidence="2">
    <location>
        <position position="69"/>
    </location>
    <ligand>
        <name>[4Fe-4S] cluster</name>
        <dbReference type="ChEBI" id="CHEBI:49883"/>
        <label>2</label>
    </ligand>
</feature>
<feature type="binding site" evidence="2">
    <location>
        <position position="105"/>
    </location>
    <ligand>
        <name>[4Fe-4S] cluster</name>
        <dbReference type="ChEBI" id="CHEBI:49883"/>
        <label>2</label>
    </ligand>
</feature>
<feature type="binding site" evidence="1">
    <location>
        <position position="144"/>
    </location>
    <ligand>
        <name>S-adenosyl-L-methionine</name>
        <dbReference type="ChEBI" id="CHEBI:59789"/>
    </ligand>
</feature>
<feature type="binding site" evidence="1">
    <location>
        <begin position="193"/>
        <end position="195"/>
    </location>
    <ligand>
        <name>S-adenosyl-L-methionine</name>
        <dbReference type="ChEBI" id="CHEBI:59789"/>
    </ligand>
</feature>
<feature type="binding site" evidence="1">
    <location>
        <position position="267"/>
    </location>
    <ligand>
        <name>S-adenosyl-L-methionine</name>
        <dbReference type="ChEBI" id="CHEBI:59789"/>
    </ligand>
</feature>
<organism>
    <name type="scientific">Clostridioides difficile (strain R20291)</name>
    <name type="common">Peptoclostridium difficile</name>
    <dbReference type="NCBI Taxonomy" id="645463"/>
    <lineage>
        <taxon>Bacteria</taxon>
        <taxon>Bacillati</taxon>
        <taxon>Bacillota</taxon>
        <taxon>Clostridia</taxon>
        <taxon>Peptostreptococcales</taxon>
        <taxon>Peptostreptococcaceae</taxon>
        <taxon>Clostridioides</taxon>
    </lineage>
</organism>
<accession>C9YHW3</accession>
<dbReference type="EC" id="1.97.1.-" evidence="4"/>
<dbReference type="EMBL" id="FN545816">
    <property type="protein sequence ID" value="CBE01729.1"/>
    <property type="status" value="ALT_INIT"/>
    <property type="molecule type" value="Genomic_DNA"/>
</dbReference>
<dbReference type="RefSeq" id="WP_009888001.1">
    <property type="nucleotide sequence ID" value="NZ_CP115183.1"/>
</dbReference>
<dbReference type="SMR" id="C9YHW3"/>
<dbReference type="KEGG" id="cdl:CDR20291_0154"/>
<dbReference type="HOGENOM" id="CLU_058969_0_0_9"/>
<dbReference type="Proteomes" id="UP000002070">
    <property type="component" value="Chromosome"/>
</dbReference>
<dbReference type="GO" id="GO:0051539">
    <property type="term" value="F:4 iron, 4 sulfur cluster binding"/>
    <property type="evidence" value="ECO:0007669"/>
    <property type="project" value="UniProtKB-KW"/>
</dbReference>
<dbReference type="GO" id="GO:0046872">
    <property type="term" value="F:metal ion binding"/>
    <property type="evidence" value="ECO:0007669"/>
    <property type="project" value="UniProtKB-KW"/>
</dbReference>
<dbReference type="GO" id="GO:0016491">
    <property type="term" value="F:oxidoreductase activity"/>
    <property type="evidence" value="ECO:0007669"/>
    <property type="project" value="UniProtKB-KW"/>
</dbReference>
<dbReference type="Gene3D" id="3.20.20.70">
    <property type="entry name" value="Aldolase class I"/>
    <property type="match status" value="1"/>
</dbReference>
<dbReference type="InterPro" id="IPR034438">
    <property type="entry name" value="4-hPhe_decarboxylase_activase"/>
</dbReference>
<dbReference type="InterPro" id="IPR017896">
    <property type="entry name" value="4Fe4S_Fe-S-bd"/>
</dbReference>
<dbReference type="InterPro" id="IPR013785">
    <property type="entry name" value="Aldolase_TIM"/>
</dbReference>
<dbReference type="InterPro" id="IPR040074">
    <property type="entry name" value="BssD/PflA/YjjW"/>
</dbReference>
<dbReference type="InterPro" id="IPR034457">
    <property type="entry name" value="Organic_radical-activating"/>
</dbReference>
<dbReference type="InterPro" id="IPR012839">
    <property type="entry name" value="Organic_radical_activase"/>
</dbReference>
<dbReference type="InterPro" id="IPR001989">
    <property type="entry name" value="Radical_activat_CS"/>
</dbReference>
<dbReference type="InterPro" id="IPR007197">
    <property type="entry name" value="rSAM"/>
</dbReference>
<dbReference type="NCBIfam" id="NF033717">
    <property type="entry name" value="HPDL_rSAM_activ"/>
    <property type="match status" value="1"/>
</dbReference>
<dbReference type="NCBIfam" id="TIGR02494">
    <property type="entry name" value="PFLE_PFLC"/>
    <property type="match status" value="1"/>
</dbReference>
<dbReference type="PANTHER" id="PTHR30352:SF4">
    <property type="entry name" value="PYRUVATE FORMATE-LYASE 2-ACTIVATING ENZYME"/>
    <property type="match status" value="1"/>
</dbReference>
<dbReference type="PANTHER" id="PTHR30352">
    <property type="entry name" value="PYRUVATE FORMATE-LYASE-ACTIVATING ENZYME"/>
    <property type="match status" value="1"/>
</dbReference>
<dbReference type="Pfam" id="PF13353">
    <property type="entry name" value="Fer4_12"/>
    <property type="match status" value="1"/>
</dbReference>
<dbReference type="Pfam" id="PF04055">
    <property type="entry name" value="Radical_SAM"/>
    <property type="match status" value="1"/>
</dbReference>
<dbReference type="PIRSF" id="PIRSF000371">
    <property type="entry name" value="PFL_act_enz"/>
    <property type="match status" value="1"/>
</dbReference>
<dbReference type="SFLD" id="SFLDF00279">
    <property type="entry name" value="4-hydroxyphenylacetate_decarbo"/>
    <property type="match status" value="1"/>
</dbReference>
<dbReference type="SFLD" id="SFLDG01118">
    <property type="entry name" value="activating_enzymes__group_2"/>
    <property type="match status" value="1"/>
</dbReference>
<dbReference type="SFLD" id="SFLDG01066">
    <property type="entry name" value="organic_radical-activating_enz"/>
    <property type="match status" value="1"/>
</dbReference>
<dbReference type="SUPFAM" id="SSF54862">
    <property type="entry name" value="4Fe-4S ferredoxins"/>
    <property type="match status" value="1"/>
</dbReference>
<dbReference type="SUPFAM" id="SSF102114">
    <property type="entry name" value="Radical SAM enzymes"/>
    <property type="match status" value="1"/>
</dbReference>
<dbReference type="PROSITE" id="PS51379">
    <property type="entry name" value="4FE4S_FER_2"/>
    <property type="match status" value="1"/>
</dbReference>
<dbReference type="PROSITE" id="PS01087">
    <property type="entry name" value="RADICAL_ACTIVATING"/>
    <property type="match status" value="1"/>
</dbReference>
<dbReference type="PROSITE" id="PS51918">
    <property type="entry name" value="RADICAL_SAM"/>
    <property type="match status" value="1"/>
</dbReference>
<name>HPDA_CLODR</name>